<name>RL31_ECOLC</name>
<reference key="1">
    <citation type="submission" date="2008-02" db="EMBL/GenBank/DDBJ databases">
        <title>Complete sequence of Escherichia coli C str. ATCC 8739.</title>
        <authorList>
            <person name="Copeland A."/>
            <person name="Lucas S."/>
            <person name="Lapidus A."/>
            <person name="Glavina del Rio T."/>
            <person name="Dalin E."/>
            <person name="Tice H."/>
            <person name="Bruce D."/>
            <person name="Goodwin L."/>
            <person name="Pitluck S."/>
            <person name="Kiss H."/>
            <person name="Brettin T."/>
            <person name="Detter J.C."/>
            <person name="Han C."/>
            <person name="Kuske C.R."/>
            <person name="Schmutz J."/>
            <person name="Larimer F."/>
            <person name="Land M."/>
            <person name="Hauser L."/>
            <person name="Kyrpides N."/>
            <person name="Mikhailova N."/>
            <person name="Ingram L."/>
            <person name="Richardson P."/>
        </authorList>
    </citation>
    <scope>NUCLEOTIDE SEQUENCE [LARGE SCALE GENOMIC DNA]</scope>
    <source>
        <strain>ATCC 8739 / DSM 1576 / NBRC 3972 / NCIMB 8545 / WDCM 00012 / Crooks</strain>
    </source>
</reference>
<keyword id="KW-0007">Acetylation</keyword>
<keyword id="KW-0479">Metal-binding</keyword>
<keyword id="KW-0687">Ribonucleoprotein</keyword>
<keyword id="KW-0689">Ribosomal protein</keyword>
<keyword id="KW-0694">RNA-binding</keyword>
<keyword id="KW-0699">rRNA-binding</keyword>
<keyword id="KW-0862">Zinc</keyword>
<comment type="function">
    <text evidence="1">Binds the 23S rRNA.</text>
</comment>
<comment type="cofactor">
    <cofactor evidence="1">
        <name>Zn(2+)</name>
        <dbReference type="ChEBI" id="CHEBI:29105"/>
    </cofactor>
    <text evidence="1">Binds 1 zinc ion per subunit.</text>
</comment>
<comment type="subunit">
    <text evidence="1">Part of the 50S ribosomal subunit.</text>
</comment>
<comment type="similarity">
    <text evidence="1">Belongs to the bacterial ribosomal protein bL31 family. Type A subfamily.</text>
</comment>
<organism>
    <name type="scientific">Escherichia coli (strain ATCC 8739 / DSM 1576 / NBRC 3972 / NCIMB 8545 / WDCM 00012 / Crooks)</name>
    <dbReference type="NCBI Taxonomy" id="481805"/>
    <lineage>
        <taxon>Bacteria</taxon>
        <taxon>Pseudomonadati</taxon>
        <taxon>Pseudomonadota</taxon>
        <taxon>Gammaproteobacteria</taxon>
        <taxon>Enterobacterales</taxon>
        <taxon>Enterobacteriaceae</taxon>
        <taxon>Escherichia</taxon>
    </lineage>
</organism>
<protein>
    <recommendedName>
        <fullName evidence="1">Large ribosomal subunit protein bL31</fullName>
    </recommendedName>
    <alternativeName>
        <fullName evidence="2">50S ribosomal protein L31</fullName>
    </alternativeName>
</protein>
<evidence type="ECO:0000255" key="1">
    <source>
        <dbReference type="HAMAP-Rule" id="MF_00501"/>
    </source>
</evidence>
<evidence type="ECO:0000305" key="2"/>
<sequence length="70" mass="7871">MKKDIHPKYEEITASCSCGNVMKIRSTVGHDLNLDVCSKCHPFFTGKQRDVATGGRVDRFNKRFNIPGSK</sequence>
<feature type="chain" id="PRO_1000126619" description="Large ribosomal subunit protein bL31">
    <location>
        <begin position="1"/>
        <end position="70"/>
    </location>
</feature>
<feature type="binding site" evidence="1">
    <location>
        <position position="16"/>
    </location>
    <ligand>
        <name>Zn(2+)</name>
        <dbReference type="ChEBI" id="CHEBI:29105"/>
    </ligand>
</feature>
<feature type="binding site" evidence="1">
    <location>
        <position position="18"/>
    </location>
    <ligand>
        <name>Zn(2+)</name>
        <dbReference type="ChEBI" id="CHEBI:29105"/>
    </ligand>
</feature>
<feature type="binding site" evidence="1">
    <location>
        <position position="37"/>
    </location>
    <ligand>
        <name>Zn(2+)</name>
        <dbReference type="ChEBI" id="CHEBI:29105"/>
    </ligand>
</feature>
<feature type="binding site" evidence="1">
    <location>
        <position position="40"/>
    </location>
    <ligand>
        <name>Zn(2+)</name>
        <dbReference type="ChEBI" id="CHEBI:29105"/>
    </ligand>
</feature>
<feature type="modified residue" description="N6-acetyllysine" evidence="1">
    <location>
        <position position="8"/>
    </location>
</feature>
<gene>
    <name evidence="1" type="primary">rpmE</name>
    <name type="ordered locus">EcolC_4082</name>
</gene>
<proteinExistence type="inferred from homology"/>
<accession>B1IVE3</accession>
<dbReference type="EMBL" id="CP000946">
    <property type="protein sequence ID" value="ACA79680.1"/>
    <property type="molecule type" value="Genomic_DNA"/>
</dbReference>
<dbReference type="RefSeq" id="WP_000710769.1">
    <property type="nucleotide sequence ID" value="NZ_MTFT01000008.1"/>
</dbReference>
<dbReference type="SMR" id="B1IVE3"/>
<dbReference type="GeneID" id="93777962"/>
<dbReference type="KEGG" id="ecl:EcolC_4082"/>
<dbReference type="HOGENOM" id="CLU_114306_4_3_6"/>
<dbReference type="GO" id="GO:1990904">
    <property type="term" value="C:ribonucleoprotein complex"/>
    <property type="evidence" value="ECO:0007669"/>
    <property type="project" value="UniProtKB-KW"/>
</dbReference>
<dbReference type="GO" id="GO:0005840">
    <property type="term" value="C:ribosome"/>
    <property type="evidence" value="ECO:0007669"/>
    <property type="project" value="UniProtKB-KW"/>
</dbReference>
<dbReference type="GO" id="GO:0046872">
    <property type="term" value="F:metal ion binding"/>
    <property type="evidence" value="ECO:0007669"/>
    <property type="project" value="UniProtKB-KW"/>
</dbReference>
<dbReference type="GO" id="GO:0019843">
    <property type="term" value="F:rRNA binding"/>
    <property type="evidence" value="ECO:0007669"/>
    <property type="project" value="UniProtKB-KW"/>
</dbReference>
<dbReference type="GO" id="GO:0003735">
    <property type="term" value="F:structural constituent of ribosome"/>
    <property type="evidence" value="ECO:0007669"/>
    <property type="project" value="InterPro"/>
</dbReference>
<dbReference type="GO" id="GO:0006412">
    <property type="term" value="P:translation"/>
    <property type="evidence" value="ECO:0007669"/>
    <property type="project" value="UniProtKB-UniRule"/>
</dbReference>
<dbReference type="FunFam" id="4.10.830.30:FF:000001">
    <property type="entry name" value="50S ribosomal protein L31"/>
    <property type="match status" value="1"/>
</dbReference>
<dbReference type="Gene3D" id="4.10.830.30">
    <property type="entry name" value="Ribosomal protein L31"/>
    <property type="match status" value="1"/>
</dbReference>
<dbReference type="HAMAP" id="MF_00501">
    <property type="entry name" value="Ribosomal_bL31_1"/>
    <property type="match status" value="1"/>
</dbReference>
<dbReference type="InterPro" id="IPR034704">
    <property type="entry name" value="Ribosomal_bL28/bL31-like_sf"/>
</dbReference>
<dbReference type="InterPro" id="IPR002150">
    <property type="entry name" value="Ribosomal_bL31"/>
</dbReference>
<dbReference type="InterPro" id="IPR027491">
    <property type="entry name" value="Ribosomal_bL31_A"/>
</dbReference>
<dbReference type="InterPro" id="IPR042105">
    <property type="entry name" value="Ribosomal_bL31_sf"/>
</dbReference>
<dbReference type="NCBIfam" id="TIGR00105">
    <property type="entry name" value="L31"/>
    <property type="match status" value="1"/>
</dbReference>
<dbReference type="NCBIfam" id="NF000612">
    <property type="entry name" value="PRK00019.1"/>
    <property type="match status" value="1"/>
</dbReference>
<dbReference type="NCBIfam" id="NF001809">
    <property type="entry name" value="PRK00528.1"/>
    <property type="match status" value="1"/>
</dbReference>
<dbReference type="PANTHER" id="PTHR33280">
    <property type="entry name" value="50S RIBOSOMAL PROTEIN L31, CHLOROPLASTIC"/>
    <property type="match status" value="1"/>
</dbReference>
<dbReference type="PANTHER" id="PTHR33280:SF6">
    <property type="entry name" value="LARGE RIBOSOMAL SUBUNIT PROTEIN BL31A"/>
    <property type="match status" value="1"/>
</dbReference>
<dbReference type="Pfam" id="PF01197">
    <property type="entry name" value="Ribosomal_L31"/>
    <property type="match status" value="1"/>
</dbReference>
<dbReference type="PRINTS" id="PR01249">
    <property type="entry name" value="RIBOSOMALL31"/>
</dbReference>
<dbReference type="SUPFAM" id="SSF143800">
    <property type="entry name" value="L28p-like"/>
    <property type="match status" value="1"/>
</dbReference>
<dbReference type="PROSITE" id="PS01143">
    <property type="entry name" value="RIBOSOMAL_L31"/>
    <property type="match status" value="1"/>
</dbReference>